<sequence>MSRIGKEPITIPSGVETKIDGQLVEVKGPKGTLNVNVPEPISVAVEDGKIVVTRPDDHRTNRSLHGLSRSLVNNLVVGVTEGYTIKMEIFGVGYRVALKGKDLEFSLGYSHPVLIEASEGITFAVDGNTKLSVSGIDKQKVGQVAAVIRRLRKDDPYKGKGIRYEGEQIRRKVGKTGK</sequence>
<organism>
    <name type="scientific">Corynebacterium glutamicum (strain ATCC 13032 / DSM 20300 / JCM 1318 / BCRC 11384 / CCUG 27702 / LMG 3730 / NBRC 12168 / NCIMB 10025 / NRRL B-2784 / 534)</name>
    <dbReference type="NCBI Taxonomy" id="196627"/>
    <lineage>
        <taxon>Bacteria</taxon>
        <taxon>Bacillati</taxon>
        <taxon>Actinomycetota</taxon>
        <taxon>Actinomycetes</taxon>
        <taxon>Mycobacteriales</taxon>
        <taxon>Corynebacteriaceae</taxon>
        <taxon>Corynebacterium</taxon>
    </lineage>
</organism>
<evidence type="ECO:0000255" key="1">
    <source>
        <dbReference type="HAMAP-Rule" id="MF_01365"/>
    </source>
</evidence>
<evidence type="ECO:0000305" key="2"/>
<name>RL6_CORGL</name>
<proteinExistence type="inferred from homology"/>
<dbReference type="EMBL" id="BA000036">
    <property type="protein sequence ID" value="BAB97931.1"/>
    <property type="molecule type" value="Genomic_DNA"/>
</dbReference>
<dbReference type="EMBL" id="BX927149">
    <property type="protein sequence ID" value="CAF19246.1"/>
    <property type="molecule type" value="Genomic_DNA"/>
</dbReference>
<dbReference type="RefSeq" id="NP_599777.1">
    <property type="nucleotide sequence ID" value="NC_003450.3"/>
</dbReference>
<dbReference type="RefSeq" id="WP_003860588.1">
    <property type="nucleotide sequence ID" value="NC_006958.1"/>
</dbReference>
<dbReference type="SMR" id="Q8NSX7"/>
<dbReference type="STRING" id="196627.cg0629"/>
<dbReference type="GeneID" id="1021537"/>
<dbReference type="KEGG" id="cgb:cg0629"/>
<dbReference type="KEGG" id="cgl:Cgl0538"/>
<dbReference type="PATRIC" id="fig|196627.13.peg.532"/>
<dbReference type="eggNOG" id="COG0097">
    <property type="taxonomic scope" value="Bacteria"/>
</dbReference>
<dbReference type="HOGENOM" id="CLU_065464_1_2_11"/>
<dbReference type="OrthoDB" id="9805007at2"/>
<dbReference type="BioCyc" id="CORYNE:G18NG-10100-MONOMER"/>
<dbReference type="Proteomes" id="UP000000582">
    <property type="component" value="Chromosome"/>
</dbReference>
<dbReference type="Proteomes" id="UP000001009">
    <property type="component" value="Chromosome"/>
</dbReference>
<dbReference type="GO" id="GO:0022625">
    <property type="term" value="C:cytosolic large ribosomal subunit"/>
    <property type="evidence" value="ECO:0007669"/>
    <property type="project" value="TreeGrafter"/>
</dbReference>
<dbReference type="GO" id="GO:0019843">
    <property type="term" value="F:rRNA binding"/>
    <property type="evidence" value="ECO:0007669"/>
    <property type="project" value="UniProtKB-UniRule"/>
</dbReference>
<dbReference type="GO" id="GO:0003735">
    <property type="term" value="F:structural constituent of ribosome"/>
    <property type="evidence" value="ECO:0007669"/>
    <property type="project" value="InterPro"/>
</dbReference>
<dbReference type="GO" id="GO:0002181">
    <property type="term" value="P:cytoplasmic translation"/>
    <property type="evidence" value="ECO:0007669"/>
    <property type="project" value="TreeGrafter"/>
</dbReference>
<dbReference type="FunFam" id="3.90.930.12:FF:000001">
    <property type="entry name" value="50S ribosomal protein L6"/>
    <property type="match status" value="1"/>
</dbReference>
<dbReference type="FunFam" id="3.90.930.12:FF:000002">
    <property type="entry name" value="50S ribosomal protein L6"/>
    <property type="match status" value="1"/>
</dbReference>
<dbReference type="Gene3D" id="3.90.930.12">
    <property type="entry name" value="Ribosomal protein L6, alpha-beta domain"/>
    <property type="match status" value="2"/>
</dbReference>
<dbReference type="HAMAP" id="MF_01365_B">
    <property type="entry name" value="Ribosomal_uL6_B"/>
    <property type="match status" value="1"/>
</dbReference>
<dbReference type="InterPro" id="IPR000702">
    <property type="entry name" value="Ribosomal_uL6-like"/>
</dbReference>
<dbReference type="InterPro" id="IPR036789">
    <property type="entry name" value="Ribosomal_uL6-like_a/b-dom_sf"/>
</dbReference>
<dbReference type="InterPro" id="IPR020040">
    <property type="entry name" value="Ribosomal_uL6_a/b-dom"/>
</dbReference>
<dbReference type="InterPro" id="IPR019906">
    <property type="entry name" value="Ribosomal_uL6_bac-type"/>
</dbReference>
<dbReference type="NCBIfam" id="TIGR03654">
    <property type="entry name" value="L6_bact"/>
    <property type="match status" value="1"/>
</dbReference>
<dbReference type="PANTHER" id="PTHR11655">
    <property type="entry name" value="60S/50S RIBOSOMAL PROTEIN L6/L9"/>
    <property type="match status" value="1"/>
</dbReference>
<dbReference type="PANTHER" id="PTHR11655:SF14">
    <property type="entry name" value="LARGE RIBOSOMAL SUBUNIT PROTEIN UL6M"/>
    <property type="match status" value="1"/>
</dbReference>
<dbReference type="Pfam" id="PF00347">
    <property type="entry name" value="Ribosomal_L6"/>
    <property type="match status" value="2"/>
</dbReference>
<dbReference type="PIRSF" id="PIRSF002162">
    <property type="entry name" value="Ribosomal_L6"/>
    <property type="match status" value="1"/>
</dbReference>
<dbReference type="PRINTS" id="PR00059">
    <property type="entry name" value="RIBOSOMALL6"/>
</dbReference>
<dbReference type="SUPFAM" id="SSF56053">
    <property type="entry name" value="Ribosomal protein L6"/>
    <property type="match status" value="2"/>
</dbReference>
<keyword id="KW-1185">Reference proteome</keyword>
<keyword id="KW-0687">Ribonucleoprotein</keyword>
<keyword id="KW-0689">Ribosomal protein</keyword>
<keyword id="KW-0694">RNA-binding</keyword>
<keyword id="KW-0699">rRNA-binding</keyword>
<reference key="1">
    <citation type="journal article" date="2003" name="Appl. Microbiol. Biotechnol.">
        <title>The Corynebacterium glutamicum genome: features and impacts on biotechnological processes.</title>
        <authorList>
            <person name="Ikeda M."/>
            <person name="Nakagawa S."/>
        </authorList>
    </citation>
    <scope>NUCLEOTIDE SEQUENCE [LARGE SCALE GENOMIC DNA]</scope>
    <source>
        <strain>ATCC 13032 / DSM 20300 / JCM 1318 / BCRC 11384 / CCUG 27702 / LMG 3730 / NBRC 12168 / NCIMB 10025 / NRRL B-2784 / 534</strain>
    </source>
</reference>
<reference key="2">
    <citation type="journal article" date="2003" name="J. Biotechnol.">
        <title>The complete Corynebacterium glutamicum ATCC 13032 genome sequence and its impact on the production of L-aspartate-derived amino acids and vitamins.</title>
        <authorList>
            <person name="Kalinowski J."/>
            <person name="Bathe B."/>
            <person name="Bartels D."/>
            <person name="Bischoff N."/>
            <person name="Bott M."/>
            <person name="Burkovski A."/>
            <person name="Dusch N."/>
            <person name="Eggeling L."/>
            <person name="Eikmanns B.J."/>
            <person name="Gaigalat L."/>
            <person name="Goesmann A."/>
            <person name="Hartmann M."/>
            <person name="Huthmacher K."/>
            <person name="Kraemer R."/>
            <person name="Linke B."/>
            <person name="McHardy A.C."/>
            <person name="Meyer F."/>
            <person name="Moeckel B."/>
            <person name="Pfefferle W."/>
            <person name="Puehler A."/>
            <person name="Rey D.A."/>
            <person name="Rueckert C."/>
            <person name="Rupp O."/>
            <person name="Sahm H."/>
            <person name="Wendisch V.F."/>
            <person name="Wiegraebe I."/>
            <person name="Tauch A."/>
        </authorList>
    </citation>
    <scope>NUCLEOTIDE SEQUENCE [LARGE SCALE GENOMIC DNA]</scope>
    <source>
        <strain>ATCC 13032 / DSM 20300 / JCM 1318 / BCRC 11384 / CCUG 27702 / LMG 3730 / NBRC 12168 / NCIMB 10025 / NRRL B-2784 / 534</strain>
    </source>
</reference>
<comment type="function">
    <text evidence="1">This protein binds to the 23S rRNA, and is important in its secondary structure. It is located near the subunit interface in the base of the L7/L12 stalk, and near the tRNA binding site of the peptidyltransferase center.</text>
</comment>
<comment type="subunit">
    <text evidence="1">Part of the 50S ribosomal subunit.</text>
</comment>
<comment type="similarity">
    <text evidence="1">Belongs to the universal ribosomal protein uL6 family.</text>
</comment>
<feature type="chain" id="PRO_0000260857" description="Large ribosomal subunit protein uL6">
    <location>
        <begin position="1"/>
        <end position="178"/>
    </location>
</feature>
<gene>
    <name evidence="1" type="primary">rplF</name>
    <name type="ordered locus">Cgl0538</name>
    <name type="ordered locus">cg0629</name>
</gene>
<protein>
    <recommendedName>
        <fullName evidence="1">Large ribosomal subunit protein uL6</fullName>
    </recommendedName>
    <alternativeName>
        <fullName evidence="2">50S ribosomal protein L6</fullName>
    </alternativeName>
</protein>
<accession>Q8NSX7</accession>
<accession>Q6M7L1</accession>